<accession>A9W7L6</accession>
<name>TATA_METEP</name>
<protein>
    <recommendedName>
        <fullName evidence="1">Sec-independent protein translocase protein TatA</fullName>
    </recommendedName>
</protein>
<feature type="chain" id="PRO_1000197878" description="Sec-independent protein translocase protein TatA">
    <location>
        <begin position="1"/>
        <end position="95"/>
    </location>
</feature>
<feature type="transmembrane region" description="Helical" evidence="1">
    <location>
        <begin position="1"/>
        <end position="21"/>
    </location>
</feature>
<feature type="region of interest" description="Disordered" evidence="2">
    <location>
        <begin position="42"/>
        <end position="95"/>
    </location>
</feature>
<gene>
    <name evidence="1" type="primary">tatA</name>
    <name type="ordered locus">Mext_3399</name>
</gene>
<reference key="1">
    <citation type="submission" date="2007-12" db="EMBL/GenBank/DDBJ databases">
        <title>Complete sequence of Methylobacterium extorquens PA1.</title>
        <authorList>
            <consortium name="US DOE Joint Genome Institute"/>
            <person name="Copeland A."/>
            <person name="Lucas S."/>
            <person name="Lapidus A."/>
            <person name="Barry K."/>
            <person name="Glavina del Rio T."/>
            <person name="Dalin E."/>
            <person name="Tice H."/>
            <person name="Pitluck S."/>
            <person name="Saunders E."/>
            <person name="Brettin T."/>
            <person name="Bruce D."/>
            <person name="Detter J.C."/>
            <person name="Han C."/>
            <person name="Schmutz J."/>
            <person name="Larimer F."/>
            <person name="Land M."/>
            <person name="Hauser L."/>
            <person name="Kyrpides N."/>
            <person name="Kim E."/>
            <person name="Marx C."/>
            <person name="Richardson P."/>
        </authorList>
    </citation>
    <scope>NUCLEOTIDE SEQUENCE [LARGE SCALE GENOMIC DNA]</scope>
    <source>
        <strain>PA1</strain>
    </source>
</reference>
<dbReference type="EMBL" id="CP000908">
    <property type="protein sequence ID" value="ABY31785.1"/>
    <property type="molecule type" value="Genomic_DNA"/>
</dbReference>
<dbReference type="RefSeq" id="WP_012254652.1">
    <property type="nucleotide sequence ID" value="NC_010172.1"/>
</dbReference>
<dbReference type="SMR" id="A9W7L6"/>
<dbReference type="KEGG" id="mex:Mext_3399"/>
<dbReference type="eggNOG" id="COG1826">
    <property type="taxonomic scope" value="Bacteria"/>
</dbReference>
<dbReference type="HOGENOM" id="CLU_086034_5_0_5"/>
<dbReference type="BioCyc" id="MEXT419610:MEXT_RS17065-MONOMER"/>
<dbReference type="GO" id="GO:0033281">
    <property type="term" value="C:TAT protein transport complex"/>
    <property type="evidence" value="ECO:0007669"/>
    <property type="project" value="UniProtKB-UniRule"/>
</dbReference>
<dbReference type="GO" id="GO:0008320">
    <property type="term" value="F:protein transmembrane transporter activity"/>
    <property type="evidence" value="ECO:0007669"/>
    <property type="project" value="UniProtKB-UniRule"/>
</dbReference>
<dbReference type="GO" id="GO:0043953">
    <property type="term" value="P:protein transport by the Tat complex"/>
    <property type="evidence" value="ECO:0007669"/>
    <property type="project" value="UniProtKB-UniRule"/>
</dbReference>
<dbReference type="Gene3D" id="1.20.5.3310">
    <property type="match status" value="1"/>
</dbReference>
<dbReference type="HAMAP" id="MF_00236">
    <property type="entry name" value="TatA_E"/>
    <property type="match status" value="1"/>
</dbReference>
<dbReference type="InterPro" id="IPR003369">
    <property type="entry name" value="TatA/B/E"/>
</dbReference>
<dbReference type="InterPro" id="IPR006312">
    <property type="entry name" value="TatA/E"/>
</dbReference>
<dbReference type="NCBIfam" id="NF001940">
    <property type="entry name" value="PRK00720.1"/>
    <property type="match status" value="1"/>
</dbReference>
<dbReference type="NCBIfam" id="TIGR01411">
    <property type="entry name" value="tatAE"/>
    <property type="match status" value="1"/>
</dbReference>
<dbReference type="PANTHER" id="PTHR42982">
    <property type="entry name" value="SEC-INDEPENDENT PROTEIN TRANSLOCASE PROTEIN TATA"/>
    <property type="match status" value="1"/>
</dbReference>
<dbReference type="PANTHER" id="PTHR42982:SF1">
    <property type="entry name" value="SEC-INDEPENDENT PROTEIN TRANSLOCASE PROTEIN TATA"/>
    <property type="match status" value="1"/>
</dbReference>
<dbReference type="Pfam" id="PF02416">
    <property type="entry name" value="TatA_B_E"/>
    <property type="match status" value="1"/>
</dbReference>
<proteinExistence type="inferred from homology"/>
<sequence length="95" mass="9979">MGSMSVWHWVIVAVVVMLLFGRGKVSELMGDVAKGIKAFKKGMADDETQPNTATSVPPVGPNDPVRTLPHQGAPGTAPQPPHVQPHVPAGDHKAV</sequence>
<comment type="function">
    <text evidence="1">Part of the twin-arginine translocation (Tat) system that transports large folded proteins containing a characteristic twin-arginine motif in their signal peptide across membranes. TatA could form the protein-conducting channel of the Tat system.</text>
</comment>
<comment type="subunit">
    <text evidence="1">The Tat system comprises two distinct complexes: a TatABC complex, containing multiple copies of TatA, TatB and TatC subunits, and a separate TatA complex, containing only TatA subunits. Substrates initially bind to the TatABC complex, which probably triggers association of the separate TatA complex to form the active translocon.</text>
</comment>
<comment type="subcellular location">
    <subcellularLocation>
        <location evidence="1">Cell inner membrane</location>
        <topology evidence="1">Single-pass membrane protein</topology>
    </subcellularLocation>
</comment>
<comment type="similarity">
    <text evidence="1">Belongs to the TatA/E family.</text>
</comment>
<evidence type="ECO:0000255" key="1">
    <source>
        <dbReference type="HAMAP-Rule" id="MF_00236"/>
    </source>
</evidence>
<evidence type="ECO:0000256" key="2">
    <source>
        <dbReference type="SAM" id="MobiDB-lite"/>
    </source>
</evidence>
<keyword id="KW-0997">Cell inner membrane</keyword>
<keyword id="KW-1003">Cell membrane</keyword>
<keyword id="KW-0472">Membrane</keyword>
<keyword id="KW-0653">Protein transport</keyword>
<keyword id="KW-0811">Translocation</keyword>
<keyword id="KW-0812">Transmembrane</keyword>
<keyword id="KW-1133">Transmembrane helix</keyword>
<keyword id="KW-0813">Transport</keyword>
<organism>
    <name type="scientific">Methylorubrum extorquens (strain PA1)</name>
    <name type="common">Methylobacterium extorquens</name>
    <dbReference type="NCBI Taxonomy" id="419610"/>
    <lineage>
        <taxon>Bacteria</taxon>
        <taxon>Pseudomonadati</taxon>
        <taxon>Pseudomonadota</taxon>
        <taxon>Alphaproteobacteria</taxon>
        <taxon>Hyphomicrobiales</taxon>
        <taxon>Methylobacteriaceae</taxon>
        <taxon>Methylorubrum</taxon>
    </lineage>
</organism>